<sequence length="285" mass="31321">MGNLFCCVLVKQSDVAVKERFGKFQKVLNPGLQFVPWVIGDYVAGTLTLRLQQLDVQCETKTKDNVFVTVVASIQYRVLADKASDAFYRLSNPTTQIKAYVFDVIRACVPKLNLDDVFEQKNEIAKSVEEELDKAMTAYGYEILQTLIIDIEPDQQVKRAMNEINAAARMRVAASEKAEAEKIIQIKRAEGEAESKYLSGLGIARQRQAIVDGLRDSVLGFAGNVPGTSAKDVLDMVMMTQYFDTMRDIGATSKSSAVFIPHGPGAVSDVAAQIRNGLLQANNAS</sequence>
<reference key="1">
    <citation type="journal article" date="2000" name="Nature">
        <title>Sequence and analysis of chromosome 3 of the plant Arabidopsis thaliana.</title>
        <authorList>
            <person name="Salanoubat M."/>
            <person name="Lemcke K."/>
            <person name="Rieger M."/>
            <person name="Ansorge W."/>
            <person name="Unseld M."/>
            <person name="Fartmann B."/>
            <person name="Valle G."/>
            <person name="Bloecker H."/>
            <person name="Perez-Alonso M."/>
            <person name="Obermaier B."/>
            <person name="Delseny M."/>
            <person name="Boutry M."/>
            <person name="Grivell L.A."/>
            <person name="Mache R."/>
            <person name="Puigdomenech P."/>
            <person name="De Simone V."/>
            <person name="Choisne N."/>
            <person name="Artiguenave F."/>
            <person name="Robert C."/>
            <person name="Brottier P."/>
            <person name="Wincker P."/>
            <person name="Cattolico L."/>
            <person name="Weissenbach J."/>
            <person name="Saurin W."/>
            <person name="Quetier F."/>
            <person name="Schaefer M."/>
            <person name="Mueller-Auer S."/>
            <person name="Gabel C."/>
            <person name="Fuchs M."/>
            <person name="Benes V."/>
            <person name="Wurmbach E."/>
            <person name="Drzonek H."/>
            <person name="Erfle H."/>
            <person name="Jordan N."/>
            <person name="Bangert S."/>
            <person name="Wiedelmann R."/>
            <person name="Kranz H."/>
            <person name="Voss H."/>
            <person name="Holland R."/>
            <person name="Brandt P."/>
            <person name="Nyakatura G."/>
            <person name="Vezzi A."/>
            <person name="D'Angelo M."/>
            <person name="Pallavicini A."/>
            <person name="Toppo S."/>
            <person name="Simionati B."/>
            <person name="Conrad A."/>
            <person name="Hornischer K."/>
            <person name="Kauer G."/>
            <person name="Loehnert T.-H."/>
            <person name="Nordsiek G."/>
            <person name="Reichelt J."/>
            <person name="Scharfe M."/>
            <person name="Schoen O."/>
            <person name="Bargues M."/>
            <person name="Terol J."/>
            <person name="Climent J."/>
            <person name="Navarro P."/>
            <person name="Collado C."/>
            <person name="Perez-Perez A."/>
            <person name="Ottenwaelder B."/>
            <person name="Duchemin D."/>
            <person name="Cooke R."/>
            <person name="Laudie M."/>
            <person name="Berger-Llauro C."/>
            <person name="Purnelle B."/>
            <person name="Masuy D."/>
            <person name="de Haan M."/>
            <person name="Maarse A.C."/>
            <person name="Alcaraz J.-P."/>
            <person name="Cottet A."/>
            <person name="Casacuberta E."/>
            <person name="Monfort A."/>
            <person name="Argiriou A."/>
            <person name="Flores M."/>
            <person name="Liguori R."/>
            <person name="Vitale D."/>
            <person name="Mannhaupt G."/>
            <person name="Haase D."/>
            <person name="Schoof H."/>
            <person name="Rudd S."/>
            <person name="Zaccaria P."/>
            <person name="Mewes H.-W."/>
            <person name="Mayer K.F.X."/>
            <person name="Kaul S."/>
            <person name="Town C.D."/>
            <person name="Koo H.L."/>
            <person name="Tallon L.J."/>
            <person name="Jenkins J."/>
            <person name="Rooney T."/>
            <person name="Rizzo M."/>
            <person name="Walts A."/>
            <person name="Utterback T."/>
            <person name="Fujii C.Y."/>
            <person name="Shea T.P."/>
            <person name="Creasy T.H."/>
            <person name="Haas B."/>
            <person name="Maiti R."/>
            <person name="Wu D."/>
            <person name="Peterson J."/>
            <person name="Van Aken S."/>
            <person name="Pai G."/>
            <person name="Militscher J."/>
            <person name="Sellers P."/>
            <person name="Gill J.E."/>
            <person name="Feldblyum T.V."/>
            <person name="Preuss D."/>
            <person name="Lin X."/>
            <person name="Nierman W.C."/>
            <person name="Salzberg S.L."/>
            <person name="White O."/>
            <person name="Venter J.C."/>
            <person name="Fraser C.M."/>
            <person name="Kaneko T."/>
            <person name="Nakamura Y."/>
            <person name="Sato S."/>
            <person name="Kato T."/>
            <person name="Asamizu E."/>
            <person name="Sasamoto S."/>
            <person name="Kimura T."/>
            <person name="Idesawa K."/>
            <person name="Kawashima K."/>
            <person name="Kishida Y."/>
            <person name="Kiyokawa C."/>
            <person name="Kohara M."/>
            <person name="Matsumoto M."/>
            <person name="Matsuno A."/>
            <person name="Muraki A."/>
            <person name="Nakayama S."/>
            <person name="Nakazaki N."/>
            <person name="Shinpo S."/>
            <person name="Takeuchi C."/>
            <person name="Wada T."/>
            <person name="Watanabe A."/>
            <person name="Yamada M."/>
            <person name="Yasuda M."/>
            <person name="Tabata S."/>
        </authorList>
    </citation>
    <scope>NUCLEOTIDE SEQUENCE [LARGE SCALE GENOMIC DNA]</scope>
    <source>
        <strain>cv. Columbia</strain>
    </source>
</reference>
<reference key="2">
    <citation type="journal article" date="2017" name="Plant J.">
        <title>Araport11: a complete reannotation of the Arabidopsis thaliana reference genome.</title>
        <authorList>
            <person name="Cheng C.Y."/>
            <person name="Krishnakumar V."/>
            <person name="Chan A.P."/>
            <person name="Thibaud-Nissen F."/>
            <person name="Schobel S."/>
            <person name="Town C.D."/>
        </authorList>
    </citation>
    <scope>GENOME REANNOTATION</scope>
    <source>
        <strain>cv. Columbia</strain>
    </source>
</reference>
<reference key="3">
    <citation type="submission" date="2006-03" db="EMBL/GenBank/DDBJ databases">
        <title>Arabidopsis ORF clones.</title>
        <authorList>
            <person name="Shinn P."/>
            <person name="Chen H."/>
            <person name="Kim C.J."/>
            <person name="Ecker J.R."/>
        </authorList>
    </citation>
    <scope>NUCLEOTIDE SEQUENCE [LARGE SCALE MRNA]</scope>
    <source>
        <strain>cv. Columbia</strain>
    </source>
</reference>
<reference key="4">
    <citation type="submission" date="2002-03" db="EMBL/GenBank/DDBJ databases">
        <title>Full-length cDNA from Arabidopsis thaliana.</title>
        <authorList>
            <person name="Brover V.V."/>
            <person name="Troukhan M.E."/>
            <person name="Alexandrov N.A."/>
            <person name="Lu Y.-P."/>
            <person name="Flavell R.B."/>
            <person name="Feldmann K.A."/>
        </authorList>
    </citation>
    <scope>NUCLEOTIDE SEQUENCE [LARGE SCALE MRNA]</scope>
</reference>
<reference key="5">
    <citation type="journal article" date="2004" name="Mol. Cell. Proteomics">
        <title>Identification of new intrinsic proteins in Arabidopsis plasma membrane proteome.</title>
        <authorList>
            <person name="Marmagne A."/>
            <person name="Rouet M.-A."/>
            <person name="Ferro M."/>
            <person name="Rolland N."/>
            <person name="Alcon C."/>
            <person name="Joyard J."/>
            <person name="Garin J."/>
            <person name="Barbier-Brygoo H."/>
            <person name="Ephritikhine G."/>
        </authorList>
    </citation>
    <scope>IDENTIFICATION BY MASS SPECTROMETRY</scope>
    <scope>SUBCELLULAR LOCATION</scope>
</reference>
<reference key="6">
    <citation type="journal article" date="2007" name="Mol. Cell. Proteomics">
        <title>A high content in lipid-modified peripheral proteins and integral receptor kinases features in the arabidopsis plasma membrane proteome.</title>
        <authorList>
            <person name="Marmagne A."/>
            <person name="Ferro M."/>
            <person name="Meinnel T."/>
            <person name="Bruley C."/>
            <person name="Kuhn L."/>
            <person name="Garin J."/>
            <person name="Barbier-Brygoo H."/>
            <person name="Ephritikhine G."/>
        </authorList>
    </citation>
    <scope>IDENTIFICATION BY MASS SPECTROMETRY</scope>
    <scope>SUBCELLULAR LOCATION [LARGE SCALE ANALYSIS]</scope>
</reference>
<reference key="7">
    <citation type="book" date="2009" name="Proceedings of the 20th international conference on Arabidopsis research">
        <title>New classes of proteins forming complexes with resistance proteins.</title>
        <authorList>
            <person name="Qi Y."/>
            <person name="Katagiri F."/>
        </authorList>
    </citation>
    <scope>INTERACTION WITH RESISTANCE PROTEINS</scope>
    <scope>SUBUNIT</scope>
    <scope>SUBCELLULAR LOCATION</scope>
</reference>
<proteinExistence type="evidence at protein level"/>
<organism>
    <name type="scientific">Arabidopsis thaliana</name>
    <name type="common">Mouse-ear cress</name>
    <dbReference type="NCBI Taxonomy" id="3702"/>
    <lineage>
        <taxon>Eukaryota</taxon>
        <taxon>Viridiplantae</taxon>
        <taxon>Streptophyta</taxon>
        <taxon>Embryophyta</taxon>
        <taxon>Tracheophyta</taxon>
        <taxon>Spermatophyta</taxon>
        <taxon>Magnoliopsida</taxon>
        <taxon>eudicotyledons</taxon>
        <taxon>Gunneridae</taxon>
        <taxon>Pentapetalae</taxon>
        <taxon>rosids</taxon>
        <taxon>malvids</taxon>
        <taxon>Brassicales</taxon>
        <taxon>Brassicaceae</taxon>
        <taxon>Camelineae</taxon>
        <taxon>Arabidopsis</taxon>
    </lineage>
</organism>
<accession>Q9SRH6</accession>
<dbReference type="EMBL" id="AC008261">
    <property type="protein sequence ID" value="AAF26146.1"/>
    <property type="molecule type" value="Genomic_DNA"/>
</dbReference>
<dbReference type="EMBL" id="AC010676">
    <property type="protein sequence ID" value="AAF03497.1"/>
    <property type="molecule type" value="Genomic_DNA"/>
</dbReference>
<dbReference type="EMBL" id="CP002686">
    <property type="protein sequence ID" value="AEE73633.1"/>
    <property type="molecule type" value="Genomic_DNA"/>
</dbReference>
<dbReference type="EMBL" id="BT024707">
    <property type="protein sequence ID" value="ABD59045.1"/>
    <property type="molecule type" value="mRNA"/>
</dbReference>
<dbReference type="EMBL" id="AY084426">
    <property type="protein sequence ID" value="AAM61000.1"/>
    <property type="molecule type" value="mRNA"/>
</dbReference>
<dbReference type="SMR" id="Q9SRH6"/>
<dbReference type="BioGRID" id="6642">
    <property type="interactions" value="9"/>
</dbReference>
<dbReference type="FunCoup" id="Q9SRH6">
    <property type="interactions" value="219"/>
</dbReference>
<dbReference type="IntAct" id="Q9SRH6">
    <property type="interactions" value="6"/>
</dbReference>
<dbReference type="MINT" id="Q9SRH6"/>
<dbReference type="STRING" id="3702.Q9SRH6"/>
<dbReference type="iPTMnet" id="Q9SRH6"/>
<dbReference type="SwissPalm" id="Q9SRH6"/>
<dbReference type="PaxDb" id="3702-AT3G01290.1"/>
<dbReference type="ProteomicsDB" id="230225"/>
<dbReference type="EnsemblPlants" id="AT3G01290.1">
    <property type="protein sequence ID" value="AT3G01290.1"/>
    <property type="gene ID" value="AT3G01290"/>
</dbReference>
<dbReference type="GeneID" id="821309"/>
<dbReference type="Gramene" id="AT3G01290.1">
    <property type="protein sequence ID" value="AT3G01290.1"/>
    <property type="gene ID" value="AT3G01290"/>
</dbReference>
<dbReference type="KEGG" id="ath:AT3G01290"/>
<dbReference type="Araport" id="AT3G01290"/>
<dbReference type="TAIR" id="AT3G01290">
    <property type="gene designation" value="HIR2"/>
</dbReference>
<dbReference type="eggNOG" id="KOG2620">
    <property type="taxonomic scope" value="Eukaryota"/>
</dbReference>
<dbReference type="HOGENOM" id="CLU_024949_5_1_1"/>
<dbReference type="InParanoid" id="Q9SRH6"/>
<dbReference type="OMA" id="WIAYRAA"/>
<dbReference type="OrthoDB" id="1061095at2759"/>
<dbReference type="PhylomeDB" id="Q9SRH6"/>
<dbReference type="PRO" id="PR:Q9SRH6"/>
<dbReference type="Proteomes" id="UP000006548">
    <property type="component" value="Chromosome 3"/>
</dbReference>
<dbReference type="ExpressionAtlas" id="Q9SRH6">
    <property type="expression patterns" value="baseline and differential"/>
</dbReference>
<dbReference type="GO" id="GO:0005829">
    <property type="term" value="C:cytosol"/>
    <property type="evidence" value="ECO:0007005"/>
    <property type="project" value="TAIR"/>
</dbReference>
<dbReference type="GO" id="GO:0005739">
    <property type="term" value="C:mitochondrion"/>
    <property type="evidence" value="ECO:0007005"/>
    <property type="project" value="TAIR"/>
</dbReference>
<dbReference type="GO" id="GO:0000325">
    <property type="term" value="C:plant-type vacuole"/>
    <property type="evidence" value="ECO:0007005"/>
    <property type="project" value="TAIR"/>
</dbReference>
<dbReference type="GO" id="GO:0005886">
    <property type="term" value="C:plasma membrane"/>
    <property type="evidence" value="ECO:0007005"/>
    <property type="project" value="TAIR"/>
</dbReference>
<dbReference type="GO" id="GO:0009506">
    <property type="term" value="C:plasmodesma"/>
    <property type="evidence" value="ECO:0007005"/>
    <property type="project" value="TAIR"/>
</dbReference>
<dbReference type="GO" id="GO:0002239">
    <property type="term" value="P:response to oomycetes"/>
    <property type="evidence" value="ECO:0000270"/>
    <property type="project" value="TAIR"/>
</dbReference>
<dbReference type="CDD" id="cd03407">
    <property type="entry name" value="SPFH_like_u4"/>
    <property type="match status" value="1"/>
</dbReference>
<dbReference type="FunFam" id="3.30.479.30:FF:000013">
    <property type="entry name" value="Hypersensitive-induced response protein 1"/>
    <property type="match status" value="1"/>
</dbReference>
<dbReference type="Gene3D" id="3.30.479.30">
    <property type="entry name" value="Band 7 domain"/>
    <property type="match status" value="1"/>
</dbReference>
<dbReference type="InterPro" id="IPR050710">
    <property type="entry name" value="Band7/mec-2_domain"/>
</dbReference>
<dbReference type="InterPro" id="IPR001107">
    <property type="entry name" value="Band_7"/>
</dbReference>
<dbReference type="InterPro" id="IPR036013">
    <property type="entry name" value="Band_7/SPFH_dom_sf"/>
</dbReference>
<dbReference type="PANTHER" id="PTHR43327:SF51">
    <property type="entry name" value="HYPERSENSITIVE-INDUCED RESPONSE PROTEIN 3"/>
    <property type="match status" value="1"/>
</dbReference>
<dbReference type="PANTHER" id="PTHR43327">
    <property type="entry name" value="STOMATIN-LIKE PROTEIN 2, MITOCHONDRIAL"/>
    <property type="match status" value="1"/>
</dbReference>
<dbReference type="Pfam" id="PF01145">
    <property type="entry name" value="Band_7"/>
    <property type="match status" value="1"/>
</dbReference>
<dbReference type="SMART" id="SM00244">
    <property type="entry name" value="PHB"/>
    <property type="match status" value="1"/>
</dbReference>
<dbReference type="SUPFAM" id="SSF117892">
    <property type="entry name" value="Band 7/SPFH domain"/>
    <property type="match status" value="1"/>
</dbReference>
<feature type="initiator methionine" description="Removed" evidence="1">
    <location>
        <position position="1"/>
    </location>
</feature>
<feature type="chain" id="PRO_0000398598" description="Hypersensitive-induced response protein 3">
    <location>
        <begin position="2"/>
        <end position="285"/>
    </location>
</feature>
<feature type="coiled-coil region" evidence="1">
    <location>
        <begin position="113"/>
        <end position="139"/>
    </location>
</feature>
<feature type="coiled-coil region" evidence="1">
    <location>
        <begin position="165"/>
        <end position="185"/>
    </location>
</feature>
<feature type="lipid moiety-binding region" description="N-myristoyl glycine" evidence="1">
    <location>
        <position position="2"/>
    </location>
</feature>
<evidence type="ECO:0000255" key="1"/>
<evidence type="ECO:0000269" key="2">
    <source>
    </source>
</evidence>
<evidence type="ECO:0000269" key="3">
    <source ref="7"/>
</evidence>
<evidence type="ECO:0000305" key="4"/>
<evidence type="ECO:0000305" key="5">
    <source>
    </source>
</evidence>
<evidence type="ECO:0000305" key="6">
    <source ref="7"/>
</evidence>
<name>HIR3_ARATH</name>
<gene>
    <name type="primary">HIR3</name>
    <name type="synonym">P31</name>
    <name type="ordered locus">At3g01290</name>
    <name type="ORF">T22N4.8</name>
    <name type="ORF">T4P13.3</name>
</gene>
<keyword id="KW-1003">Cell membrane</keyword>
<keyword id="KW-0175">Coiled coil</keyword>
<keyword id="KW-0449">Lipoprotein</keyword>
<keyword id="KW-0472">Membrane</keyword>
<keyword id="KW-0519">Myristate</keyword>
<keyword id="KW-1185">Reference proteome</keyword>
<protein>
    <recommendedName>
        <fullName>Hypersensitive-induced response protein 3</fullName>
        <shortName>AtHIR3</shortName>
    </recommendedName>
</protein>
<comment type="subunit">
    <text evidence="3">Self-interacts and forms heteromers. Interacts with NB-LRR class of R proteins before R proteins (e.g. RPS2 or RPM1) are activated by the effectors.</text>
</comment>
<comment type="subcellular location">
    <subcellularLocation>
        <location evidence="2 5 6">Cell membrane</location>
        <topology evidence="4">Lipid-anchor</topology>
        <orientation evidence="5 6">Cytoplasmic side</orientation>
    </subcellularLocation>
</comment>